<protein>
    <recommendedName>
        <fullName evidence="1">Ferrochelatase</fullName>
        <ecNumber evidence="1">4.98.1.1</ecNumber>
    </recommendedName>
    <alternativeName>
        <fullName evidence="1">Heme synthase</fullName>
    </alternativeName>
    <alternativeName>
        <fullName evidence="1">Protoheme ferro-lyase</fullName>
    </alternativeName>
</protein>
<proteinExistence type="inferred from homology"/>
<evidence type="ECO:0000255" key="1">
    <source>
        <dbReference type="HAMAP-Rule" id="MF_00323"/>
    </source>
</evidence>
<keyword id="KW-0963">Cytoplasm</keyword>
<keyword id="KW-0350">Heme biosynthesis</keyword>
<keyword id="KW-0408">Iron</keyword>
<keyword id="KW-0456">Lyase</keyword>
<keyword id="KW-0479">Metal-binding</keyword>
<keyword id="KW-0627">Porphyrin biosynthesis</keyword>
<reference key="1">
    <citation type="journal article" date="2009" name="Proc. Natl. Acad. Sci. U.S.A.">
        <title>The mosaic genome structure of the Wolbachia wRi strain infecting Drosophila simulans.</title>
        <authorList>
            <person name="Klasson L."/>
            <person name="Westberg J."/>
            <person name="Sapountzis P."/>
            <person name="Naeslund K."/>
            <person name="Lutnaes Y."/>
            <person name="Darby A.C."/>
            <person name="Veneti Z."/>
            <person name="Chen L."/>
            <person name="Braig H.R."/>
            <person name="Garrett R."/>
            <person name="Bourtzis K."/>
            <person name="Andersson S.G."/>
        </authorList>
    </citation>
    <scope>NUCLEOTIDE SEQUENCE [LARGE SCALE GENOMIC DNA]</scope>
    <source>
        <strain>wRi</strain>
    </source>
</reference>
<sequence length="315" mass="36350">MKKAVILFNLGGPDSLNAVRPFLFNLFYDRRIINLPNPFRFLLAKFISAKRENTARKIYEEIGGKSPILENTKMQANALELKLNENRNHVHKVFICMRYWRPFADEVIESVKQFDPDEVILLPLYPQYSTTTTLSSIENWQKNAKRYGLKCNTKMIHRYYDNQDFIEAHTNLIAKYYKLARKIGKPRVLFSAHSLPLSIIKKGDPYASQVERSVELIVEKLAINNLDWSICYQSKIGPVKWLEPSTESELLRAKADGVPVVLSPISFVSEHSETLVELDIEYKAIIKDGYYFRVPTLSTDPLFIKCLADLCINLP</sequence>
<comment type="function">
    <text evidence="1">Catalyzes the ferrous insertion into protoporphyrin IX.</text>
</comment>
<comment type="catalytic activity">
    <reaction evidence="1">
        <text>heme b + 2 H(+) = protoporphyrin IX + Fe(2+)</text>
        <dbReference type="Rhea" id="RHEA:22584"/>
        <dbReference type="ChEBI" id="CHEBI:15378"/>
        <dbReference type="ChEBI" id="CHEBI:29033"/>
        <dbReference type="ChEBI" id="CHEBI:57306"/>
        <dbReference type="ChEBI" id="CHEBI:60344"/>
        <dbReference type="EC" id="4.98.1.1"/>
    </reaction>
</comment>
<comment type="pathway">
    <text evidence="1">Porphyrin-containing compound metabolism; protoheme biosynthesis; protoheme from protoporphyrin-IX: step 1/1.</text>
</comment>
<comment type="subcellular location">
    <subcellularLocation>
        <location evidence="1">Cytoplasm</location>
    </subcellularLocation>
</comment>
<comment type="similarity">
    <text evidence="1">Belongs to the ferrochelatase family.</text>
</comment>
<gene>
    <name evidence="1" type="primary">hemH</name>
    <name type="ordered locus">WRi_011580</name>
</gene>
<dbReference type="EC" id="4.98.1.1" evidence="1"/>
<dbReference type="EMBL" id="CP001391">
    <property type="protein sequence ID" value="ACN95852.1"/>
    <property type="molecule type" value="Genomic_DNA"/>
</dbReference>
<dbReference type="RefSeq" id="WP_007548918.1">
    <property type="nucleotide sequence ID" value="NZ_MKIF01000092.1"/>
</dbReference>
<dbReference type="SMR" id="C0R4L0"/>
<dbReference type="STRING" id="66084.WRi_011580"/>
<dbReference type="KEGG" id="wri:WRi_011580"/>
<dbReference type="HOGENOM" id="CLU_018884_4_1_5"/>
<dbReference type="UniPathway" id="UPA00252">
    <property type="reaction ID" value="UER00325"/>
</dbReference>
<dbReference type="Proteomes" id="UP000001293">
    <property type="component" value="Chromosome"/>
</dbReference>
<dbReference type="GO" id="GO:0005737">
    <property type="term" value="C:cytoplasm"/>
    <property type="evidence" value="ECO:0007669"/>
    <property type="project" value="UniProtKB-SubCell"/>
</dbReference>
<dbReference type="GO" id="GO:0004325">
    <property type="term" value="F:ferrochelatase activity"/>
    <property type="evidence" value="ECO:0007669"/>
    <property type="project" value="UniProtKB-UniRule"/>
</dbReference>
<dbReference type="GO" id="GO:0046872">
    <property type="term" value="F:metal ion binding"/>
    <property type="evidence" value="ECO:0007669"/>
    <property type="project" value="UniProtKB-KW"/>
</dbReference>
<dbReference type="GO" id="GO:0006783">
    <property type="term" value="P:heme biosynthetic process"/>
    <property type="evidence" value="ECO:0007669"/>
    <property type="project" value="UniProtKB-UniRule"/>
</dbReference>
<dbReference type="CDD" id="cd00419">
    <property type="entry name" value="Ferrochelatase_C"/>
    <property type="match status" value="1"/>
</dbReference>
<dbReference type="CDD" id="cd03411">
    <property type="entry name" value="Ferrochelatase_N"/>
    <property type="match status" value="1"/>
</dbReference>
<dbReference type="Gene3D" id="3.40.50.1400">
    <property type="match status" value="2"/>
</dbReference>
<dbReference type="HAMAP" id="MF_00323">
    <property type="entry name" value="Ferrochelatase"/>
    <property type="match status" value="1"/>
</dbReference>
<dbReference type="InterPro" id="IPR001015">
    <property type="entry name" value="Ferrochelatase"/>
</dbReference>
<dbReference type="InterPro" id="IPR019772">
    <property type="entry name" value="Ferrochelatase_AS"/>
</dbReference>
<dbReference type="InterPro" id="IPR033644">
    <property type="entry name" value="Ferrochelatase_C"/>
</dbReference>
<dbReference type="InterPro" id="IPR033659">
    <property type="entry name" value="Ferrochelatase_N"/>
</dbReference>
<dbReference type="NCBIfam" id="TIGR00109">
    <property type="entry name" value="hemH"/>
    <property type="match status" value="1"/>
</dbReference>
<dbReference type="PANTHER" id="PTHR11108">
    <property type="entry name" value="FERROCHELATASE"/>
    <property type="match status" value="1"/>
</dbReference>
<dbReference type="PANTHER" id="PTHR11108:SF1">
    <property type="entry name" value="FERROCHELATASE, MITOCHONDRIAL"/>
    <property type="match status" value="1"/>
</dbReference>
<dbReference type="Pfam" id="PF00762">
    <property type="entry name" value="Ferrochelatase"/>
    <property type="match status" value="1"/>
</dbReference>
<dbReference type="SUPFAM" id="SSF53800">
    <property type="entry name" value="Chelatase"/>
    <property type="match status" value="1"/>
</dbReference>
<dbReference type="PROSITE" id="PS00534">
    <property type="entry name" value="FERROCHELATASE"/>
    <property type="match status" value="1"/>
</dbReference>
<organism>
    <name type="scientific">Wolbachia sp. subsp. Drosophila simulans (strain wRi)</name>
    <dbReference type="NCBI Taxonomy" id="66084"/>
    <lineage>
        <taxon>Bacteria</taxon>
        <taxon>Pseudomonadati</taxon>
        <taxon>Pseudomonadota</taxon>
        <taxon>Alphaproteobacteria</taxon>
        <taxon>Rickettsiales</taxon>
        <taxon>Anaplasmataceae</taxon>
        <taxon>Wolbachieae</taxon>
        <taxon>Wolbachia</taxon>
    </lineage>
</organism>
<accession>C0R4L0</accession>
<name>HEMH_WOLWR</name>
<feature type="chain" id="PRO_1000189997" description="Ferrochelatase">
    <location>
        <begin position="1"/>
        <end position="315"/>
    </location>
</feature>
<feature type="binding site" evidence="1">
    <location>
        <position position="193"/>
    </location>
    <ligand>
        <name>Fe cation</name>
        <dbReference type="ChEBI" id="CHEBI:24875"/>
    </ligand>
</feature>
<feature type="binding site" evidence="1">
    <location>
        <position position="273"/>
    </location>
    <ligand>
        <name>Fe cation</name>
        <dbReference type="ChEBI" id="CHEBI:24875"/>
    </ligand>
</feature>